<evidence type="ECO:0000255" key="1">
    <source>
        <dbReference type="HAMAP-Rule" id="MF_01038"/>
    </source>
</evidence>
<gene>
    <name evidence="1" type="primary">gpmI</name>
    <name type="ordered locus">SE_0560</name>
</gene>
<feature type="chain" id="PRO_0000212213" description="2,3-bisphosphoglycerate-independent phosphoglycerate mutase">
    <location>
        <begin position="1"/>
        <end position="505"/>
    </location>
</feature>
<feature type="active site" description="Phosphoserine intermediate" evidence="1">
    <location>
        <position position="62"/>
    </location>
</feature>
<feature type="binding site" evidence="1">
    <location>
        <position position="12"/>
    </location>
    <ligand>
        <name>Mn(2+)</name>
        <dbReference type="ChEBI" id="CHEBI:29035"/>
        <label>2</label>
    </ligand>
</feature>
<feature type="binding site" evidence="1">
    <location>
        <position position="62"/>
    </location>
    <ligand>
        <name>Mn(2+)</name>
        <dbReference type="ChEBI" id="CHEBI:29035"/>
        <label>2</label>
    </ligand>
</feature>
<feature type="binding site" evidence="1">
    <location>
        <position position="123"/>
    </location>
    <ligand>
        <name>substrate</name>
    </ligand>
</feature>
<feature type="binding site" evidence="1">
    <location>
        <begin position="153"/>
        <end position="154"/>
    </location>
    <ligand>
        <name>substrate</name>
    </ligand>
</feature>
<feature type="binding site" evidence="1">
    <location>
        <position position="185"/>
    </location>
    <ligand>
        <name>substrate</name>
    </ligand>
</feature>
<feature type="binding site" evidence="1">
    <location>
        <position position="191"/>
    </location>
    <ligand>
        <name>substrate</name>
    </ligand>
</feature>
<feature type="binding site" evidence="1">
    <location>
        <begin position="257"/>
        <end position="260"/>
    </location>
    <ligand>
        <name>substrate</name>
    </ligand>
</feature>
<feature type="binding site" evidence="1">
    <location>
        <position position="330"/>
    </location>
    <ligand>
        <name>substrate</name>
    </ligand>
</feature>
<feature type="binding site" evidence="1">
    <location>
        <position position="397"/>
    </location>
    <ligand>
        <name>Mn(2+)</name>
        <dbReference type="ChEBI" id="CHEBI:29035"/>
        <label>1</label>
    </ligand>
</feature>
<feature type="binding site" evidence="1">
    <location>
        <position position="401"/>
    </location>
    <ligand>
        <name>Mn(2+)</name>
        <dbReference type="ChEBI" id="CHEBI:29035"/>
        <label>1</label>
    </ligand>
</feature>
<feature type="binding site" evidence="1">
    <location>
        <position position="438"/>
    </location>
    <ligand>
        <name>Mn(2+)</name>
        <dbReference type="ChEBI" id="CHEBI:29035"/>
        <label>2</label>
    </ligand>
</feature>
<feature type="binding site" evidence="1">
    <location>
        <position position="439"/>
    </location>
    <ligand>
        <name>Mn(2+)</name>
        <dbReference type="ChEBI" id="CHEBI:29035"/>
        <label>2</label>
    </ligand>
</feature>
<feature type="binding site" evidence="1">
    <location>
        <position position="456"/>
    </location>
    <ligand>
        <name>Mn(2+)</name>
        <dbReference type="ChEBI" id="CHEBI:29035"/>
        <label>1</label>
    </ligand>
</feature>
<accession>Q8CPY4</accession>
<organism>
    <name type="scientific">Staphylococcus epidermidis (strain ATCC 12228 / FDA PCI 1200)</name>
    <dbReference type="NCBI Taxonomy" id="176280"/>
    <lineage>
        <taxon>Bacteria</taxon>
        <taxon>Bacillati</taxon>
        <taxon>Bacillota</taxon>
        <taxon>Bacilli</taxon>
        <taxon>Bacillales</taxon>
        <taxon>Staphylococcaceae</taxon>
        <taxon>Staphylococcus</taxon>
    </lineage>
</organism>
<reference key="1">
    <citation type="journal article" date="2003" name="Mol. Microbiol.">
        <title>Genome-based analysis of virulence genes in a non-biofilm-forming Staphylococcus epidermidis strain (ATCC 12228).</title>
        <authorList>
            <person name="Zhang Y.-Q."/>
            <person name="Ren S.-X."/>
            <person name="Li H.-L."/>
            <person name="Wang Y.-X."/>
            <person name="Fu G."/>
            <person name="Yang J."/>
            <person name="Qin Z.-Q."/>
            <person name="Miao Y.-G."/>
            <person name="Wang W.-Y."/>
            <person name="Chen R.-S."/>
            <person name="Shen Y."/>
            <person name="Chen Z."/>
            <person name="Yuan Z.-H."/>
            <person name="Zhao G.-P."/>
            <person name="Qu D."/>
            <person name="Danchin A."/>
            <person name="Wen Y.-M."/>
        </authorList>
    </citation>
    <scope>NUCLEOTIDE SEQUENCE [LARGE SCALE GENOMIC DNA]</scope>
    <source>
        <strain>ATCC 12228 / FDA PCI 1200</strain>
    </source>
</reference>
<comment type="function">
    <text evidence="1">Catalyzes the interconversion of 2-phosphoglycerate and 3-phosphoglycerate.</text>
</comment>
<comment type="catalytic activity">
    <reaction evidence="1">
        <text>(2R)-2-phosphoglycerate = (2R)-3-phosphoglycerate</text>
        <dbReference type="Rhea" id="RHEA:15901"/>
        <dbReference type="ChEBI" id="CHEBI:58272"/>
        <dbReference type="ChEBI" id="CHEBI:58289"/>
        <dbReference type="EC" id="5.4.2.12"/>
    </reaction>
</comment>
<comment type="cofactor">
    <cofactor evidence="1">
        <name>Mn(2+)</name>
        <dbReference type="ChEBI" id="CHEBI:29035"/>
    </cofactor>
    <text evidence="1">Binds 2 manganese ions per subunit.</text>
</comment>
<comment type="pathway">
    <text evidence="1">Carbohydrate degradation; glycolysis; pyruvate from D-glyceraldehyde 3-phosphate: step 3/5.</text>
</comment>
<comment type="subunit">
    <text evidence="1">Monomer.</text>
</comment>
<comment type="similarity">
    <text evidence="1">Belongs to the BPG-independent phosphoglycerate mutase family.</text>
</comment>
<proteinExistence type="inferred from homology"/>
<sequence>MAKQPTALIILDGFANRESEHGNAVKQAHKPNFDRYYEKYPTTQIEASGLDVGLPEGQMGNSEVGHMNIGAGRIVYQSLTRINKSIEDGEFFDNTVLNNAVKHVKDNGSALHVFGLLSDGGVHSHYKHLFAILELAKKQGIDKVYVHAFLDGRDVDQKSALKYIEETEDKFKELGVGQFASVSGRYYAMDRDKRWDREERAYNAIRNFEGPTFTSAKAGVEANYKNDVTDEFVEPFIVEGQNDGVNDGDAVIFYNFRPDRAAQLSEIFTNKAFDGFKVEQVDNLFYATFTKYNDNVDAEIVFEKVDLNNTIGEVAQDNGLKQLRIAETEKYPHVTYFMSGGRNEEFEGERRRLIDSPKVATYDLKPEMSAYEVKDALLEELDKGDLDLILLNFANPDMVGHSGMLEPTIKAIEAVDECLGEVVDKIIDMGGHAIITADHGNSDQVLTDDDQPMTTHTTNPVPVIVTKEGVTLRETGRLGDLAPTLLDLLNVKQPSEMTGESLIKH</sequence>
<keyword id="KW-0324">Glycolysis</keyword>
<keyword id="KW-0413">Isomerase</keyword>
<keyword id="KW-0464">Manganese</keyword>
<keyword id="KW-0479">Metal-binding</keyword>
<dbReference type="EC" id="5.4.2.12" evidence="1"/>
<dbReference type="EMBL" id="AE015929">
    <property type="protein sequence ID" value="AAO04157.1"/>
    <property type="molecule type" value="Genomic_DNA"/>
</dbReference>
<dbReference type="RefSeq" id="NP_764115.1">
    <property type="nucleotide sequence ID" value="NC_004461.1"/>
</dbReference>
<dbReference type="RefSeq" id="WP_001829591.1">
    <property type="nucleotide sequence ID" value="NZ_WBME01000030.1"/>
</dbReference>
<dbReference type="SMR" id="Q8CPY4"/>
<dbReference type="GeneID" id="50019292"/>
<dbReference type="KEGG" id="sep:SE_0560"/>
<dbReference type="PATRIC" id="fig|176280.10.peg.531"/>
<dbReference type="eggNOG" id="COG0696">
    <property type="taxonomic scope" value="Bacteria"/>
</dbReference>
<dbReference type="HOGENOM" id="CLU_026099_2_0_9"/>
<dbReference type="OrthoDB" id="9800863at2"/>
<dbReference type="UniPathway" id="UPA00109">
    <property type="reaction ID" value="UER00186"/>
</dbReference>
<dbReference type="Proteomes" id="UP000001411">
    <property type="component" value="Chromosome"/>
</dbReference>
<dbReference type="GO" id="GO:0005829">
    <property type="term" value="C:cytosol"/>
    <property type="evidence" value="ECO:0007669"/>
    <property type="project" value="TreeGrafter"/>
</dbReference>
<dbReference type="GO" id="GO:0030145">
    <property type="term" value="F:manganese ion binding"/>
    <property type="evidence" value="ECO:0007669"/>
    <property type="project" value="UniProtKB-UniRule"/>
</dbReference>
<dbReference type="GO" id="GO:0004619">
    <property type="term" value="F:phosphoglycerate mutase activity"/>
    <property type="evidence" value="ECO:0007669"/>
    <property type="project" value="UniProtKB-EC"/>
</dbReference>
<dbReference type="GO" id="GO:0006007">
    <property type="term" value="P:glucose catabolic process"/>
    <property type="evidence" value="ECO:0007669"/>
    <property type="project" value="InterPro"/>
</dbReference>
<dbReference type="GO" id="GO:0006096">
    <property type="term" value="P:glycolytic process"/>
    <property type="evidence" value="ECO:0007669"/>
    <property type="project" value="UniProtKB-UniRule"/>
</dbReference>
<dbReference type="CDD" id="cd16010">
    <property type="entry name" value="iPGM"/>
    <property type="match status" value="1"/>
</dbReference>
<dbReference type="FunFam" id="3.40.1450.10:FF:000001">
    <property type="entry name" value="2,3-bisphosphoglycerate-independent phosphoglycerate mutase"/>
    <property type="match status" value="1"/>
</dbReference>
<dbReference type="FunFam" id="3.40.720.10:FF:000001">
    <property type="entry name" value="2,3-bisphosphoglycerate-independent phosphoglycerate mutase"/>
    <property type="match status" value="1"/>
</dbReference>
<dbReference type="Gene3D" id="3.40.720.10">
    <property type="entry name" value="Alkaline Phosphatase, subunit A"/>
    <property type="match status" value="1"/>
</dbReference>
<dbReference type="Gene3D" id="3.40.1450.10">
    <property type="entry name" value="BPG-independent phosphoglycerate mutase, domain B"/>
    <property type="match status" value="1"/>
</dbReference>
<dbReference type="HAMAP" id="MF_01038">
    <property type="entry name" value="GpmI"/>
    <property type="match status" value="1"/>
</dbReference>
<dbReference type="InterPro" id="IPR017850">
    <property type="entry name" value="Alkaline_phosphatase_core_sf"/>
</dbReference>
<dbReference type="InterPro" id="IPR011258">
    <property type="entry name" value="BPG-indep_PGM_N"/>
</dbReference>
<dbReference type="InterPro" id="IPR006124">
    <property type="entry name" value="Metalloenzyme"/>
</dbReference>
<dbReference type="InterPro" id="IPR036646">
    <property type="entry name" value="PGAM_B_sf"/>
</dbReference>
<dbReference type="InterPro" id="IPR005995">
    <property type="entry name" value="Pgm_bpd_ind"/>
</dbReference>
<dbReference type="NCBIfam" id="TIGR01307">
    <property type="entry name" value="pgm_bpd_ind"/>
    <property type="match status" value="1"/>
</dbReference>
<dbReference type="PANTHER" id="PTHR31637">
    <property type="entry name" value="2,3-BISPHOSPHOGLYCERATE-INDEPENDENT PHOSPHOGLYCERATE MUTASE"/>
    <property type="match status" value="1"/>
</dbReference>
<dbReference type="PANTHER" id="PTHR31637:SF0">
    <property type="entry name" value="2,3-BISPHOSPHOGLYCERATE-INDEPENDENT PHOSPHOGLYCERATE MUTASE"/>
    <property type="match status" value="1"/>
</dbReference>
<dbReference type="Pfam" id="PF06415">
    <property type="entry name" value="iPGM_N"/>
    <property type="match status" value="1"/>
</dbReference>
<dbReference type="Pfam" id="PF01676">
    <property type="entry name" value="Metalloenzyme"/>
    <property type="match status" value="1"/>
</dbReference>
<dbReference type="PIRSF" id="PIRSF001492">
    <property type="entry name" value="IPGAM"/>
    <property type="match status" value="1"/>
</dbReference>
<dbReference type="SUPFAM" id="SSF64158">
    <property type="entry name" value="2,3-Bisphosphoglycerate-independent phosphoglycerate mutase, substrate-binding domain"/>
    <property type="match status" value="1"/>
</dbReference>
<dbReference type="SUPFAM" id="SSF53649">
    <property type="entry name" value="Alkaline phosphatase-like"/>
    <property type="match status" value="1"/>
</dbReference>
<name>GPMI_STAES</name>
<protein>
    <recommendedName>
        <fullName evidence="1">2,3-bisphosphoglycerate-independent phosphoglycerate mutase</fullName>
        <shortName evidence="1">BPG-independent PGAM</shortName>
        <shortName evidence="1">Phosphoglyceromutase</shortName>
        <shortName evidence="1">iPGM</shortName>
        <ecNumber evidence="1">5.4.2.12</ecNumber>
    </recommendedName>
</protein>